<evidence type="ECO:0000255" key="1">
    <source>
        <dbReference type="HAMAP-Rule" id="MF_01511"/>
    </source>
</evidence>
<protein>
    <recommendedName>
        <fullName evidence="1">GMP reductase</fullName>
        <ecNumber evidence="1">1.7.1.7</ecNumber>
    </recommendedName>
    <alternativeName>
        <fullName evidence="1">Guanosine 5'-monophosphate oxidoreductase</fullName>
        <shortName evidence="1">Guanosine monophosphate reductase</shortName>
    </alternativeName>
</protein>
<accession>Q5HPK5</accession>
<reference key="1">
    <citation type="journal article" date="2005" name="J. Bacteriol.">
        <title>Insights on evolution of virulence and resistance from the complete genome analysis of an early methicillin-resistant Staphylococcus aureus strain and a biofilm-producing methicillin-resistant Staphylococcus epidermidis strain.</title>
        <authorList>
            <person name="Gill S.R."/>
            <person name="Fouts D.E."/>
            <person name="Archer G.L."/>
            <person name="Mongodin E.F."/>
            <person name="DeBoy R.T."/>
            <person name="Ravel J."/>
            <person name="Paulsen I.T."/>
            <person name="Kolonay J.F."/>
            <person name="Brinkac L.M."/>
            <person name="Beanan M.J."/>
            <person name="Dodson R.J."/>
            <person name="Daugherty S.C."/>
            <person name="Madupu R."/>
            <person name="Angiuoli S.V."/>
            <person name="Durkin A.S."/>
            <person name="Haft D.H."/>
            <person name="Vamathevan J.J."/>
            <person name="Khouri H."/>
            <person name="Utterback T.R."/>
            <person name="Lee C."/>
            <person name="Dimitrov G."/>
            <person name="Jiang L."/>
            <person name="Qin H."/>
            <person name="Weidman J."/>
            <person name="Tran K."/>
            <person name="Kang K.H."/>
            <person name="Hance I.R."/>
            <person name="Nelson K.E."/>
            <person name="Fraser C.M."/>
        </authorList>
    </citation>
    <scope>NUCLEOTIDE SEQUENCE [LARGE SCALE GENOMIC DNA]</scope>
    <source>
        <strain>ATCC 35984 / DSM 28319 / BCRC 17069 / CCUG 31568 / BM 3577 / RP62A</strain>
    </source>
</reference>
<proteinExistence type="inferred from homology"/>
<name>GUAC_STAEQ</name>
<gene>
    <name evidence="1" type="primary">guaC</name>
    <name type="ordered locus">SERP0906</name>
</gene>
<comment type="function">
    <text evidence="1">Catalyzes the irreversible NADPH-dependent deamination of GMP to IMP. It functions in the conversion of nucleobase, nucleoside and nucleotide derivatives of G to A nucleotides, and in maintaining the intracellular balance of A and G nucleotides.</text>
</comment>
<comment type="catalytic activity">
    <reaction evidence="1">
        <text>IMP + NH4(+) + NADP(+) = GMP + NADPH + 2 H(+)</text>
        <dbReference type="Rhea" id="RHEA:17185"/>
        <dbReference type="ChEBI" id="CHEBI:15378"/>
        <dbReference type="ChEBI" id="CHEBI:28938"/>
        <dbReference type="ChEBI" id="CHEBI:57783"/>
        <dbReference type="ChEBI" id="CHEBI:58053"/>
        <dbReference type="ChEBI" id="CHEBI:58115"/>
        <dbReference type="ChEBI" id="CHEBI:58349"/>
        <dbReference type="EC" id="1.7.1.7"/>
    </reaction>
</comment>
<comment type="similarity">
    <text evidence="1">Belongs to the IMPDH/GMPR family. GuaC type 2 subfamily.</text>
</comment>
<dbReference type="EC" id="1.7.1.7" evidence="1"/>
<dbReference type="EMBL" id="CP000029">
    <property type="protein sequence ID" value="AAW54273.1"/>
    <property type="molecule type" value="Genomic_DNA"/>
</dbReference>
<dbReference type="RefSeq" id="WP_001832645.1">
    <property type="nucleotide sequence ID" value="NC_002976.3"/>
</dbReference>
<dbReference type="SMR" id="Q5HPK5"/>
<dbReference type="STRING" id="176279.SERP0906"/>
<dbReference type="GeneID" id="50018853"/>
<dbReference type="KEGG" id="ser:SERP0906"/>
<dbReference type="eggNOG" id="COG0516">
    <property type="taxonomic scope" value="Bacteria"/>
</dbReference>
<dbReference type="HOGENOM" id="CLU_022552_5_0_9"/>
<dbReference type="Proteomes" id="UP000000531">
    <property type="component" value="Chromosome"/>
</dbReference>
<dbReference type="GO" id="GO:0005829">
    <property type="term" value="C:cytosol"/>
    <property type="evidence" value="ECO:0007669"/>
    <property type="project" value="TreeGrafter"/>
</dbReference>
<dbReference type="GO" id="GO:1902560">
    <property type="term" value="C:GMP reductase complex"/>
    <property type="evidence" value="ECO:0007669"/>
    <property type="project" value="InterPro"/>
</dbReference>
<dbReference type="GO" id="GO:0003920">
    <property type="term" value="F:GMP reductase activity"/>
    <property type="evidence" value="ECO:0007669"/>
    <property type="project" value="UniProtKB-UniRule"/>
</dbReference>
<dbReference type="GO" id="GO:0006163">
    <property type="term" value="P:purine nucleotide metabolic process"/>
    <property type="evidence" value="ECO:0007669"/>
    <property type="project" value="UniProtKB-UniRule"/>
</dbReference>
<dbReference type="CDD" id="cd00381">
    <property type="entry name" value="IMPDH"/>
    <property type="match status" value="1"/>
</dbReference>
<dbReference type="FunFam" id="3.20.20.70:FF:000079">
    <property type="entry name" value="GMP reductase"/>
    <property type="match status" value="1"/>
</dbReference>
<dbReference type="Gene3D" id="3.20.20.70">
    <property type="entry name" value="Aldolase class I"/>
    <property type="match status" value="1"/>
</dbReference>
<dbReference type="HAMAP" id="MF_01511">
    <property type="entry name" value="GMP_reduct_type2"/>
    <property type="match status" value="1"/>
</dbReference>
<dbReference type="InterPro" id="IPR013785">
    <property type="entry name" value="Aldolase_TIM"/>
</dbReference>
<dbReference type="InterPro" id="IPR050139">
    <property type="entry name" value="GMP_reductase"/>
</dbReference>
<dbReference type="InterPro" id="IPR005994">
    <property type="entry name" value="GuaC_type_2"/>
</dbReference>
<dbReference type="InterPro" id="IPR015875">
    <property type="entry name" value="IMP_DH/GMP_Rdtase_CS"/>
</dbReference>
<dbReference type="InterPro" id="IPR001093">
    <property type="entry name" value="IMP_DH_GMPRt"/>
</dbReference>
<dbReference type="NCBIfam" id="TIGR01306">
    <property type="entry name" value="GMP_reduct_2"/>
    <property type="match status" value="1"/>
</dbReference>
<dbReference type="NCBIfam" id="NF003966">
    <property type="entry name" value="PRK05458.1"/>
    <property type="match status" value="1"/>
</dbReference>
<dbReference type="PANTHER" id="PTHR43170">
    <property type="entry name" value="GMP REDUCTASE"/>
    <property type="match status" value="1"/>
</dbReference>
<dbReference type="PANTHER" id="PTHR43170:SF5">
    <property type="entry name" value="GMP REDUCTASE"/>
    <property type="match status" value="1"/>
</dbReference>
<dbReference type="Pfam" id="PF00478">
    <property type="entry name" value="IMPDH"/>
    <property type="match status" value="1"/>
</dbReference>
<dbReference type="PIRSF" id="PIRSF036500">
    <property type="entry name" value="GMP_red_Firmic"/>
    <property type="match status" value="1"/>
</dbReference>
<dbReference type="SMART" id="SM01240">
    <property type="entry name" value="IMPDH"/>
    <property type="match status" value="1"/>
</dbReference>
<dbReference type="SUPFAM" id="SSF51412">
    <property type="entry name" value="Inosine monophosphate dehydrogenase (IMPDH)"/>
    <property type="match status" value="1"/>
</dbReference>
<dbReference type="PROSITE" id="PS00487">
    <property type="entry name" value="IMP_DH_GMP_RED"/>
    <property type="match status" value="1"/>
</dbReference>
<organism>
    <name type="scientific">Staphylococcus epidermidis (strain ATCC 35984 / DSM 28319 / BCRC 17069 / CCUG 31568 / BM 3577 / RP62A)</name>
    <dbReference type="NCBI Taxonomy" id="176279"/>
    <lineage>
        <taxon>Bacteria</taxon>
        <taxon>Bacillati</taxon>
        <taxon>Bacillota</taxon>
        <taxon>Bacilli</taxon>
        <taxon>Bacillales</taxon>
        <taxon>Staphylococcaceae</taxon>
        <taxon>Staphylococcus</taxon>
    </lineage>
</organism>
<sequence>MKIFDYEDIQLIPNKCIVESRSECNTSVKFGPRTFKLPVVPANMQTVMNEELAQWFAENDYFYIMHRFNEENRIPFIKKMHHAGLFASISVGVKENEFNFIEKLASSSLIPEYITIDIAHGHSNSVINMIKHIKKHLPNSFVIAGNVGTPEGVRELENAGADATKVGIGPGRVCITKIKTGFGTGGWQLSALNLCNKAARKPIIADGGLRTHGDIAKSIRFGATMVMIGSLFAAHEESPGETVELDGKKYKEYFGSASEYQKGEHKNVEGKKMFVEHKGSLKDTLTEMEQDLQSSISYAGGKDLKSLRTVDYVIVRNSIFNGDRD</sequence>
<feature type="chain" id="PRO_0000093770" description="GMP reductase">
    <location>
        <begin position="1"/>
        <end position="325"/>
    </location>
</feature>
<feature type="active site" description="Thioimidate intermediate" evidence="1">
    <location>
        <position position="174"/>
    </location>
</feature>
<feature type="binding site" evidence="1">
    <location>
        <begin position="203"/>
        <end position="226"/>
    </location>
    <ligand>
        <name>NADP(+)</name>
        <dbReference type="ChEBI" id="CHEBI:58349"/>
    </ligand>
</feature>
<keyword id="KW-0521">NADP</keyword>
<keyword id="KW-0560">Oxidoreductase</keyword>
<keyword id="KW-1185">Reference proteome</keyword>